<reference key="1">
    <citation type="journal article" date="2001" name="Virology">
        <title>Analysis of the first complete DNA sequence of an invertebrate iridovirus: coding strategy of the genome of Chilo iridescent virus.</title>
        <authorList>
            <person name="Jakob N.J."/>
            <person name="Mueller K."/>
            <person name="Bahr U."/>
            <person name="Darai G."/>
        </authorList>
    </citation>
    <scope>NUCLEOTIDE SEQUENCE [LARGE SCALE GENOMIC DNA]</scope>
</reference>
<reference key="2">
    <citation type="journal article" date="2007" name="Virol. J.">
        <title>Comparative genomic analysis of the family Iridoviridae: re-annotating and defining the core set of iridovirus genes.</title>
        <authorList>
            <person name="Eaton H.E."/>
            <person name="Metcalf J."/>
            <person name="Penny E."/>
            <person name="Tcherepanov V."/>
            <person name="Upton C."/>
            <person name="Brunetti C.R."/>
        </authorList>
    </citation>
    <scope>GENOME REANNOTATION</scope>
</reference>
<organism>
    <name type="scientific">Invertebrate iridescent virus 6</name>
    <name type="common">IIV-6</name>
    <name type="synonym">Chilo iridescent virus</name>
    <dbReference type="NCBI Taxonomy" id="176652"/>
    <lineage>
        <taxon>Viruses</taxon>
        <taxon>Varidnaviria</taxon>
        <taxon>Bamfordvirae</taxon>
        <taxon>Nucleocytoviricota</taxon>
        <taxon>Megaviricetes</taxon>
        <taxon>Pimascovirales</taxon>
        <taxon>Iridoviridae</taxon>
        <taxon>Betairidovirinae</taxon>
        <taxon>Iridovirus</taxon>
    </lineage>
</organism>
<name>289L_IIV6</name>
<proteinExistence type="inferred from homology"/>
<sequence>MDALINLKDCKEYMTITFCNQEHQIKLAGTVDTPYFCGKDVCKVLGYKDIKDALKKHVDREDKLPLSEIKKVGGTAPPTFLGQTYAYLSHNDGRAVYISEGGLYSLIMSSEAPFAKDFRRLVCNVILPSIRKFGSYSIEQQLSSAMEQLALKDKSEQELQFQLKQEREEKENAYIKLRSETKRLKQQIKRTLEFNQATKQIEPLEYIYICTTEYYQQQHKFKVGGVQTFDLLKSRLTQYNSGESDSEAHFFIYIRKTVNYRSIEHAIKGLLSGFRENQSNELYIMHYDWLVKFVDAIMDGNAEFALLVNNNREQIAEDTINKEPTIVPPIQLEQIMYHRAGDNPRDLTSILDSETKRAIQDAIDSFEPYNNTVKRREFEEHLLKQSPNIKLEGKKRNAWDIARAMGSTKNPMWRYKY</sequence>
<organismHost>
    <name type="scientific">Acheta domesticus</name>
    <name type="common">House cricket</name>
    <dbReference type="NCBI Taxonomy" id="6997"/>
</organismHost>
<organismHost>
    <name type="scientific">Chilo suppressalis</name>
    <name type="common">Asiatic rice borer moth</name>
    <dbReference type="NCBI Taxonomy" id="168631"/>
</organismHost>
<organismHost>
    <name type="scientific">Gryllus bimaculatus</name>
    <name type="common">Two-spotted cricket</name>
    <dbReference type="NCBI Taxonomy" id="6999"/>
</organismHost>
<organismHost>
    <name type="scientific">Gryllus campestris</name>
    <dbReference type="NCBI Taxonomy" id="58607"/>
</organismHost>
<organismHost>
    <name type="scientific">Spodoptera frugiperda</name>
    <name type="common">Fall armyworm</name>
    <dbReference type="NCBI Taxonomy" id="7108"/>
</organismHost>
<gene>
    <name type="ORF">IIV6-289L</name>
</gene>
<accession>Q91FN5</accession>
<feature type="chain" id="PRO_0000377844" description="Putative Bro-N domain-containing protein 289L">
    <location>
        <begin position="1"/>
        <end position="417"/>
    </location>
</feature>
<feature type="domain" description="Bro-N" evidence="2">
    <location>
        <begin position="4"/>
        <end position="134"/>
    </location>
</feature>
<feature type="coiled-coil region" evidence="1">
    <location>
        <begin position="152"/>
        <end position="193"/>
    </location>
</feature>
<protein>
    <recommendedName>
        <fullName>Putative Bro-N domain-containing protein 289L</fullName>
    </recommendedName>
</protein>
<comment type="similarity">
    <text evidence="3">Belongs to the IIV-6 201R/289L family.</text>
</comment>
<dbReference type="EMBL" id="AF303741">
    <property type="protein sequence ID" value="AAK82150.1"/>
    <property type="molecule type" value="Genomic_DNA"/>
</dbReference>
<dbReference type="RefSeq" id="NP_149752.1">
    <property type="nucleotide sequence ID" value="NC_003038.1"/>
</dbReference>
<dbReference type="SMR" id="Q91FN5"/>
<dbReference type="KEGG" id="vg:1733190"/>
<dbReference type="OrthoDB" id="5682at10239"/>
<dbReference type="Proteomes" id="UP000001359">
    <property type="component" value="Genome"/>
</dbReference>
<dbReference type="InterPro" id="IPR003497">
    <property type="entry name" value="BRO_N_domain"/>
</dbReference>
<dbReference type="InterPro" id="IPR018306">
    <property type="entry name" value="Phage_T5_Orf172_DNA-bd"/>
</dbReference>
<dbReference type="PANTHER" id="PTHR36180:SF2">
    <property type="entry name" value="BRO FAMILY PROTEIN"/>
    <property type="match status" value="1"/>
</dbReference>
<dbReference type="PANTHER" id="PTHR36180">
    <property type="entry name" value="DNA-BINDING PROTEIN-RELATED-RELATED"/>
    <property type="match status" value="1"/>
</dbReference>
<dbReference type="Pfam" id="PF02498">
    <property type="entry name" value="Bro-N"/>
    <property type="match status" value="1"/>
</dbReference>
<dbReference type="Pfam" id="PF10544">
    <property type="entry name" value="T5orf172"/>
    <property type="match status" value="1"/>
</dbReference>
<dbReference type="SMART" id="SM01040">
    <property type="entry name" value="Bro-N"/>
    <property type="match status" value="1"/>
</dbReference>
<dbReference type="PROSITE" id="PS51750">
    <property type="entry name" value="BRO_N"/>
    <property type="match status" value="1"/>
</dbReference>
<evidence type="ECO:0000255" key="1"/>
<evidence type="ECO:0000255" key="2">
    <source>
        <dbReference type="PROSITE-ProRule" id="PRU01086"/>
    </source>
</evidence>
<evidence type="ECO:0000305" key="3"/>
<keyword id="KW-0175">Coiled coil</keyword>
<keyword id="KW-1185">Reference proteome</keyword>